<reference key="1">
    <citation type="submission" date="1995-07" db="EMBL/GenBank/DDBJ databases">
        <authorList>
            <person name="Delius H."/>
        </authorList>
    </citation>
    <scope>NUCLEOTIDE SEQUENCE [GENOMIC DNA]</scope>
</reference>
<reference key="2">
    <citation type="journal article" date="2002" name="Rev. Med. Virol.">
        <title>Interactions of SV40 large T antigen and other viral proteins with retinoblastoma tumour suppressor.</title>
        <authorList>
            <person name="Lee C."/>
            <person name="Cho Y."/>
        </authorList>
    </citation>
    <scope>REVIEW</scope>
</reference>
<accession>Q80935</accession>
<evidence type="ECO:0000255" key="1">
    <source>
        <dbReference type="HAMAP-Rule" id="MF_04004"/>
    </source>
</evidence>
<sequence>MHGNYPTLKEIVLELDPPDPVGLHCNEQLDSSEDEVDELATQATQDVTQPYQIVTTCGTCNRNVRLVVQCTGTDICQLHTLLLGSLEILCPVCAPKN</sequence>
<keyword id="KW-0010">Activator</keyword>
<keyword id="KW-0238">DNA-binding</keyword>
<keyword id="KW-0244">Early protein</keyword>
<keyword id="KW-1078">G1/S host cell cycle checkpoint dysregulation by virus</keyword>
<keyword id="KW-1035">Host cytoplasm</keyword>
<keyword id="KW-1048">Host nucleus</keyword>
<keyword id="KW-0945">Host-virus interaction</keyword>
<keyword id="KW-1090">Inhibition of host innate immune response by virus</keyword>
<keyword id="KW-1114">Inhibition of host interferon signaling pathway by virus</keyword>
<keyword id="KW-0922">Interferon antiviral system evasion</keyword>
<keyword id="KW-0479">Metal-binding</keyword>
<keyword id="KW-1121">Modulation of host cell cycle by virus</keyword>
<keyword id="KW-0553">Oncogene</keyword>
<keyword id="KW-0804">Transcription</keyword>
<keyword id="KW-0805">Transcription regulation</keyword>
<keyword id="KW-0899">Viral immunoevasion</keyword>
<keyword id="KW-0862">Zinc</keyword>
<keyword id="KW-0863">Zinc-finger</keyword>
<feature type="chain" id="PRO_0000133451" description="Protein E7">
    <location>
        <begin position="1"/>
        <end position="97"/>
    </location>
</feature>
<feature type="zinc finger region" evidence="1">
    <location>
        <begin position="57"/>
        <end position="93"/>
    </location>
</feature>
<feature type="region of interest" description="E7 terminal domain" evidence="1">
    <location>
        <begin position="1"/>
        <end position="41"/>
    </location>
</feature>
<feature type="short sequence motif" description="LXCXE motif; interaction with host RB1 and TMEM173/STING" evidence="1">
    <location>
        <begin position="23"/>
        <end position="27"/>
    </location>
</feature>
<feature type="short sequence motif" description="Nuclear export signal" evidence="1">
    <location>
        <begin position="75"/>
        <end position="83"/>
    </location>
</feature>
<gene>
    <name evidence="1" type="primary">E7</name>
</gene>
<comment type="function">
    <text evidence="1">Plays a role in viral genome replication by driving entry of quiescent cells into the cell cycle. Stimulation of progression from G1 to S phase allows the virus to efficiently use the cellular DNA replicating machinery to achieve viral genome replication. E7 protein has both transforming and trans-activating activities. Induces the disassembly of the E2F1 transcription factor from RB1, with subsequent transcriptional activation of E2F1-regulated S-phase genes. Interferes with host histone deacetylation mediated by HDAC1 and HDAC2, leading to transcription activation. Also plays a role in the inhibition of both antiviral and antiproliferative functions of host interferon alpha. Interaction with host TMEM173/STING impairs the ability of TMEM173/STING to sense cytosolic DNA and promote the production of type I interferon (IFN-alpha and IFN-beta).</text>
</comment>
<comment type="subunit">
    <text evidence="1">Homodimer. Homooligomer. Interacts with host RB1; this interaction induces dissociation of RB1-E2F1 complex thereby disrupting RB1 activity. Interacts with host EP300; this interaction represses EP300 transcriptional activity. Interacts with protein E2; this interaction inhibits E7 oncogenic activity. Interacts with host TMEM173/STING; this interaction impairs the ability of TMEM173/STING to sense cytosolic DNA and promote the production of type I interferon (IFN-alpha and IFN-beta).</text>
</comment>
<comment type="subcellular location">
    <subcellularLocation>
        <location evidence="1">Host cytoplasm</location>
    </subcellularLocation>
    <subcellularLocation>
        <location evidence="1">Host nucleus</location>
    </subcellularLocation>
    <text evidence="1">Predominantly found in the host nucleus.</text>
</comment>
<comment type="domain">
    <text evidence="1">The E7 terminal domain is an intrinsically disordered domain, whose flexibility and conformational transitions confer target adaptability to the oncoprotein. It allows adaptation to a variety of protein targets and exposes the PEST degradation sequence that regulates its turnover in the cell.</text>
</comment>
<comment type="PTM">
    <text evidence="1">Highly phosphorylated.</text>
</comment>
<comment type="similarity">
    <text evidence="1">Belongs to the papillomaviridae E7 protein family.</text>
</comment>
<organismHost>
    <name type="scientific">Homo sapiens</name>
    <name type="common">Human</name>
    <dbReference type="NCBI Taxonomy" id="9606"/>
</organismHost>
<organism>
    <name type="scientific">Human papillomavirus type 55</name>
    <dbReference type="NCBI Taxonomy" id="37114"/>
    <lineage>
        <taxon>Viruses</taxon>
        <taxon>Monodnaviria</taxon>
        <taxon>Shotokuvirae</taxon>
        <taxon>Cossaviricota</taxon>
        <taxon>Papovaviricetes</taxon>
        <taxon>Zurhausenvirales</taxon>
        <taxon>Papillomaviridae</taxon>
        <taxon>Firstpapillomavirinae</taxon>
        <taxon>Alphapapillomavirus</taxon>
        <taxon>Alphapapillomavirus 10</taxon>
    </lineage>
</organism>
<proteinExistence type="inferred from homology"/>
<dbReference type="EMBL" id="U31791">
    <property type="protein sequence ID" value="AAA79479.1"/>
    <property type="molecule type" value="Genomic_DNA"/>
</dbReference>
<dbReference type="SMR" id="Q80935"/>
<dbReference type="Proteomes" id="UP000152738">
    <property type="component" value="Genome"/>
</dbReference>
<dbReference type="GO" id="GO:0030430">
    <property type="term" value="C:host cell cytoplasm"/>
    <property type="evidence" value="ECO:0007669"/>
    <property type="project" value="UniProtKB-SubCell"/>
</dbReference>
<dbReference type="GO" id="GO:0042025">
    <property type="term" value="C:host cell nucleus"/>
    <property type="evidence" value="ECO:0007669"/>
    <property type="project" value="UniProtKB-SubCell"/>
</dbReference>
<dbReference type="GO" id="GO:0003677">
    <property type="term" value="F:DNA binding"/>
    <property type="evidence" value="ECO:0007669"/>
    <property type="project" value="UniProtKB-UniRule"/>
</dbReference>
<dbReference type="GO" id="GO:0003700">
    <property type="term" value="F:DNA-binding transcription factor activity"/>
    <property type="evidence" value="ECO:0007669"/>
    <property type="project" value="UniProtKB-UniRule"/>
</dbReference>
<dbReference type="GO" id="GO:0019904">
    <property type="term" value="F:protein domain specific binding"/>
    <property type="evidence" value="ECO:0007669"/>
    <property type="project" value="UniProtKB-UniRule"/>
</dbReference>
<dbReference type="GO" id="GO:0008270">
    <property type="term" value="F:zinc ion binding"/>
    <property type="evidence" value="ECO:0007669"/>
    <property type="project" value="UniProtKB-KW"/>
</dbReference>
<dbReference type="GO" id="GO:0006351">
    <property type="term" value="P:DNA-templated transcription"/>
    <property type="evidence" value="ECO:0007669"/>
    <property type="project" value="UniProtKB-UniRule"/>
</dbReference>
<dbReference type="GO" id="GO:0039645">
    <property type="term" value="P:symbiont-mediated perturbation of host cell cycle G1/S transition checkpoint"/>
    <property type="evidence" value="ECO:0007669"/>
    <property type="project" value="UniProtKB-UniRule"/>
</dbReference>
<dbReference type="GO" id="GO:0052170">
    <property type="term" value="P:symbiont-mediated suppression of host innate immune response"/>
    <property type="evidence" value="ECO:0007669"/>
    <property type="project" value="UniProtKB-KW"/>
</dbReference>
<dbReference type="GO" id="GO:0039502">
    <property type="term" value="P:symbiont-mediated suppression of host type I interferon-mediated signaling pathway"/>
    <property type="evidence" value="ECO:0007669"/>
    <property type="project" value="UniProtKB-UniRule"/>
</dbReference>
<dbReference type="Gene3D" id="3.30.160.330">
    <property type="match status" value="1"/>
</dbReference>
<dbReference type="HAMAP" id="MF_04004">
    <property type="entry name" value="PPV_E7"/>
    <property type="match status" value="1"/>
</dbReference>
<dbReference type="InterPro" id="IPR000148">
    <property type="entry name" value="Papilloma_E7"/>
</dbReference>
<dbReference type="Pfam" id="PF00527">
    <property type="entry name" value="E7"/>
    <property type="match status" value="1"/>
</dbReference>
<dbReference type="PIRSF" id="PIRSF003407">
    <property type="entry name" value="Papvi_E7"/>
    <property type="match status" value="1"/>
</dbReference>
<dbReference type="SUPFAM" id="SSF161234">
    <property type="entry name" value="E7 C-terminal domain-like"/>
    <property type="match status" value="1"/>
</dbReference>
<name>VE7_HPV55</name>
<protein>
    <recommendedName>
        <fullName evidence="1">Protein E7</fullName>
    </recommendedName>
</protein>